<proteinExistence type="inferred from homology"/>
<organism>
    <name type="scientific">Campylobacter jejuni subsp. jejuni serotype O:6 (strain 81116 / NCTC 11828)</name>
    <dbReference type="NCBI Taxonomy" id="407148"/>
    <lineage>
        <taxon>Bacteria</taxon>
        <taxon>Pseudomonadati</taxon>
        <taxon>Campylobacterota</taxon>
        <taxon>Epsilonproteobacteria</taxon>
        <taxon>Campylobacterales</taxon>
        <taxon>Campylobacteraceae</taxon>
        <taxon>Campylobacter</taxon>
    </lineage>
</organism>
<sequence length="102" mass="11609">MYAIIKHSGKQYKVSVGDELKLDHFEAESKASIEVSEVLAINDKELKVGAPFVAGAKVVLEVINHGKDKKVVIYKKRRRKDSKLKRGFRRQFTRVVVKDIKA</sequence>
<evidence type="ECO:0000255" key="1">
    <source>
        <dbReference type="HAMAP-Rule" id="MF_01363"/>
    </source>
</evidence>
<evidence type="ECO:0000305" key="2"/>
<dbReference type="EMBL" id="CP000814">
    <property type="protein sequence ID" value="ABV51686.1"/>
    <property type="molecule type" value="Genomic_DNA"/>
</dbReference>
<dbReference type="RefSeq" id="WP_002778820.1">
    <property type="nucleotide sequence ID" value="NC_009839.1"/>
</dbReference>
<dbReference type="SMR" id="A8FJP9"/>
<dbReference type="KEGG" id="cju:C8J_0087"/>
<dbReference type="HOGENOM" id="CLU_061463_3_1_7"/>
<dbReference type="GO" id="GO:0005737">
    <property type="term" value="C:cytoplasm"/>
    <property type="evidence" value="ECO:0007669"/>
    <property type="project" value="UniProtKB-ARBA"/>
</dbReference>
<dbReference type="GO" id="GO:1990904">
    <property type="term" value="C:ribonucleoprotein complex"/>
    <property type="evidence" value="ECO:0007669"/>
    <property type="project" value="UniProtKB-KW"/>
</dbReference>
<dbReference type="GO" id="GO:0005840">
    <property type="term" value="C:ribosome"/>
    <property type="evidence" value="ECO:0007669"/>
    <property type="project" value="UniProtKB-KW"/>
</dbReference>
<dbReference type="GO" id="GO:0019843">
    <property type="term" value="F:rRNA binding"/>
    <property type="evidence" value="ECO:0007669"/>
    <property type="project" value="UniProtKB-UniRule"/>
</dbReference>
<dbReference type="GO" id="GO:0003735">
    <property type="term" value="F:structural constituent of ribosome"/>
    <property type="evidence" value="ECO:0007669"/>
    <property type="project" value="InterPro"/>
</dbReference>
<dbReference type="GO" id="GO:0006412">
    <property type="term" value="P:translation"/>
    <property type="evidence" value="ECO:0007669"/>
    <property type="project" value="UniProtKB-UniRule"/>
</dbReference>
<dbReference type="HAMAP" id="MF_01363">
    <property type="entry name" value="Ribosomal_bL21"/>
    <property type="match status" value="1"/>
</dbReference>
<dbReference type="InterPro" id="IPR028909">
    <property type="entry name" value="bL21-like"/>
</dbReference>
<dbReference type="InterPro" id="IPR036164">
    <property type="entry name" value="bL21-like_sf"/>
</dbReference>
<dbReference type="InterPro" id="IPR001787">
    <property type="entry name" value="Ribosomal_bL21"/>
</dbReference>
<dbReference type="InterPro" id="IPR018258">
    <property type="entry name" value="Ribosomal_bL21_CS"/>
</dbReference>
<dbReference type="NCBIfam" id="TIGR00061">
    <property type="entry name" value="L21"/>
    <property type="match status" value="1"/>
</dbReference>
<dbReference type="PANTHER" id="PTHR21349">
    <property type="entry name" value="50S RIBOSOMAL PROTEIN L21"/>
    <property type="match status" value="1"/>
</dbReference>
<dbReference type="PANTHER" id="PTHR21349:SF0">
    <property type="entry name" value="LARGE RIBOSOMAL SUBUNIT PROTEIN BL21M"/>
    <property type="match status" value="1"/>
</dbReference>
<dbReference type="Pfam" id="PF00829">
    <property type="entry name" value="Ribosomal_L21p"/>
    <property type="match status" value="1"/>
</dbReference>
<dbReference type="SUPFAM" id="SSF141091">
    <property type="entry name" value="L21p-like"/>
    <property type="match status" value="1"/>
</dbReference>
<dbReference type="PROSITE" id="PS01169">
    <property type="entry name" value="RIBOSOMAL_L21"/>
    <property type="match status" value="1"/>
</dbReference>
<name>RL21_CAMJ8</name>
<accession>A8FJP9</accession>
<comment type="function">
    <text evidence="1">This protein binds to 23S rRNA in the presence of protein L20.</text>
</comment>
<comment type="subunit">
    <text evidence="1">Part of the 50S ribosomal subunit. Contacts protein L20.</text>
</comment>
<comment type="similarity">
    <text evidence="1">Belongs to the bacterial ribosomal protein bL21 family.</text>
</comment>
<reference key="1">
    <citation type="journal article" date="2007" name="J. Bacteriol.">
        <title>The complete genome sequence of Campylobacter jejuni strain 81116 (NCTC11828).</title>
        <authorList>
            <person name="Pearson B.M."/>
            <person name="Gaskin D.J.H."/>
            <person name="Segers R.P.A.M."/>
            <person name="Wells J.M."/>
            <person name="Nuijten P.J.M."/>
            <person name="van Vliet A.H.M."/>
        </authorList>
    </citation>
    <scope>NUCLEOTIDE SEQUENCE [LARGE SCALE GENOMIC DNA]</scope>
    <source>
        <strain>81116 / NCTC 11828</strain>
    </source>
</reference>
<keyword id="KW-0687">Ribonucleoprotein</keyword>
<keyword id="KW-0689">Ribosomal protein</keyword>
<keyword id="KW-0694">RNA-binding</keyword>
<keyword id="KW-0699">rRNA-binding</keyword>
<protein>
    <recommendedName>
        <fullName evidence="1">Large ribosomal subunit protein bL21</fullName>
    </recommendedName>
    <alternativeName>
        <fullName evidence="2">50S ribosomal protein L21</fullName>
    </alternativeName>
</protein>
<gene>
    <name evidence="1" type="primary">rplU</name>
    <name type="ordered locus">C8J_0087</name>
</gene>
<feature type="chain" id="PRO_1000073385" description="Large ribosomal subunit protein bL21">
    <location>
        <begin position="1"/>
        <end position="102"/>
    </location>
</feature>